<organism>
    <name type="scientific">Aspergillus niger (strain ATCC MYA-4892 / CBS 513.88 / FGSC A1513)</name>
    <dbReference type="NCBI Taxonomy" id="425011"/>
    <lineage>
        <taxon>Eukaryota</taxon>
        <taxon>Fungi</taxon>
        <taxon>Dikarya</taxon>
        <taxon>Ascomycota</taxon>
        <taxon>Pezizomycotina</taxon>
        <taxon>Eurotiomycetes</taxon>
        <taxon>Eurotiomycetidae</taxon>
        <taxon>Eurotiales</taxon>
        <taxon>Aspergillaceae</taxon>
        <taxon>Aspergillus</taxon>
        <taxon>Aspergillus subgen. Circumdati</taxon>
    </lineage>
</organism>
<accession>A2QA64</accession>
<reference key="1">
    <citation type="journal article" date="2007" name="Nat. Biotechnol.">
        <title>Genome sequencing and analysis of the versatile cell factory Aspergillus niger CBS 513.88.</title>
        <authorList>
            <person name="Pel H.J."/>
            <person name="de Winde J.H."/>
            <person name="Archer D.B."/>
            <person name="Dyer P.S."/>
            <person name="Hofmann G."/>
            <person name="Schaap P.J."/>
            <person name="Turner G."/>
            <person name="de Vries R.P."/>
            <person name="Albang R."/>
            <person name="Albermann K."/>
            <person name="Andersen M.R."/>
            <person name="Bendtsen J.D."/>
            <person name="Benen J.A.E."/>
            <person name="van den Berg M."/>
            <person name="Breestraat S."/>
            <person name="Caddick M.X."/>
            <person name="Contreras R."/>
            <person name="Cornell M."/>
            <person name="Coutinho P.M."/>
            <person name="Danchin E.G.J."/>
            <person name="Debets A.J.M."/>
            <person name="Dekker P."/>
            <person name="van Dijck P.W.M."/>
            <person name="van Dijk A."/>
            <person name="Dijkhuizen L."/>
            <person name="Driessen A.J.M."/>
            <person name="d'Enfert C."/>
            <person name="Geysens S."/>
            <person name="Goosen C."/>
            <person name="Groot G.S.P."/>
            <person name="de Groot P.W.J."/>
            <person name="Guillemette T."/>
            <person name="Henrissat B."/>
            <person name="Herweijer M."/>
            <person name="van den Hombergh J.P.T.W."/>
            <person name="van den Hondel C.A.M.J.J."/>
            <person name="van der Heijden R.T.J.M."/>
            <person name="van der Kaaij R.M."/>
            <person name="Klis F.M."/>
            <person name="Kools H.J."/>
            <person name="Kubicek C.P."/>
            <person name="van Kuyk P.A."/>
            <person name="Lauber J."/>
            <person name="Lu X."/>
            <person name="van der Maarel M.J.E.C."/>
            <person name="Meulenberg R."/>
            <person name="Menke H."/>
            <person name="Mortimer M.A."/>
            <person name="Nielsen J."/>
            <person name="Oliver S.G."/>
            <person name="Olsthoorn M."/>
            <person name="Pal K."/>
            <person name="van Peij N.N.M.E."/>
            <person name="Ram A.F.J."/>
            <person name="Rinas U."/>
            <person name="Roubos J.A."/>
            <person name="Sagt C.M.J."/>
            <person name="Schmoll M."/>
            <person name="Sun J."/>
            <person name="Ussery D."/>
            <person name="Varga J."/>
            <person name="Vervecken W."/>
            <person name="van de Vondervoort P.J.J."/>
            <person name="Wedler H."/>
            <person name="Woesten H.A.B."/>
            <person name="Zeng A.-P."/>
            <person name="van Ooyen A.J.J."/>
            <person name="Visser J."/>
            <person name="Stam H."/>
        </authorList>
    </citation>
    <scope>NUCLEOTIDE SEQUENCE [LARGE SCALE GENOMIC DNA]</scope>
    <source>
        <strain>ATCC MYA-4892 / CBS 513.88 / FGSC A1513</strain>
    </source>
</reference>
<sequence length="1017" mass="111810">MTRITKLCVLLLSSIGLLAAAQNQTETGWPLHDDGLTTDVQWDHYSFKVHGERIFVFSGEFHYWRIPVPGLWRDILEKIKAAGFTTFAFYSSWAWHAPNNHTVDFSTGARDITPIFELAKELGMYIIVRPGPYINAEASAGGFPLWLTTGDYGTLRNNDSRYTEAWKPYFEKMTEITSRYQITNGHNTFCYQIENEYGDQWLSDPSERVPNETAIAYMELLESSARENGILVPFTANDPNMNAMAWSRDWSNAGGNVDVVGLDSYPSCWTCDVSQCTSTNGEYVAYQVVEYYDYFLDFSPTMPSFMPEFQGGSYNPWAGPEGGCGDDTGVDFVNLFYRWNIAQRVTAMSLYMLYGGTNWGAIAAPVTATSYDYSSPISEDRSISSKYYETKLLSLFTRSARDLTMTDLIGNGTQYTNNTAVKAYELRNPTTNAGFYVTLHEDSTVGTNEAFSLRVNTSAGNLIVPRLGGSIRLNGHQSKIIVTDFTFGSETLLYSTAEVLTYAVIDKKPTLVLWVPTDESGEFAVKGAKSGSVVSKCQSCPAINFHQQGGNLIVGFTQSQGMSVVQIDNDIRVVLLDRTAAYKFWAPALTEDPLVPEDEAVVLIQGPYLVRSASLEKSTLAIKGDSINETAVEIFAPENVKTITWNGKQLKTSKSSYGSLKATIAAPASIQLPAFTSWKVNDSLPERLPTYDASGPAWVDANHMTTANPSKPATLPVLYADEYGFHNGVRLWRGYFNGTASGVFLNVQGGSAFGFSAYLNGHFLGSYLGNASIEQANQTFLFPNNITHPTTQNTLLVIHDDTGHDETTGALNPRGILEARLLPSDTTNNSTSPEFTHWRIAGTAGGESNLDPVRGAWNEDGLYAERVGWHLPGFDDSTWSSVSSSSSLSFTGATVKFFRTTIPLDIPRGLDVSISFVLGTPDNAPNAYRAQLFVNGYQYGRFNPYIGNQVVFPVPVGVLDYTGENTIGVAVWAQTEDGAGITVDWKVNYVADSSLDVSGLETGELRPGWSAERLKFA</sequence>
<feature type="signal peptide" evidence="2">
    <location>
        <begin position="1"/>
        <end position="20"/>
    </location>
</feature>
<feature type="chain" id="PRO_5000219426" description="Probable beta-galactosidase B">
    <location>
        <begin position="21"/>
        <end position="1017"/>
    </location>
</feature>
<feature type="active site" description="Proton donor" evidence="2">
    <location>
        <position position="196"/>
    </location>
</feature>
<feature type="active site" description="Nucleophile" evidence="2">
    <location>
        <position position="308"/>
    </location>
</feature>
<feature type="binding site" evidence="1">
    <location>
        <position position="90"/>
    </location>
    <ligand>
        <name>substrate</name>
    </ligand>
</feature>
<feature type="binding site" evidence="1">
    <location>
        <position position="135"/>
    </location>
    <ligand>
        <name>substrate</name>
    </ligand>
</feature>
<feature type="binding site" evidence="1">
    <location>
        <position position="136"/>
    </location>
    <ligand>
        <name>substrate</name>
    </ligand>
</feature>
<feature type="binding site" evidence="1">
    <location>
        <position position="137"/>
    </location>
    <ligand>
        <name>substrate</name>
    </ligand>
</feature>
<feature type="binding site" evidence="1">
    <location>
        <position position="195"/>
    </location>
    <ligand>
        <name>substrate</name>
    </ligand>
</feature>
<feature type="binding site" evidence="1">
    <location>
        <position position="265"/>
    </location>
    <ligand>
        <name>substrate</name>
    </ligand>
</feature>
<feature type="binding site" evidence="1">
    <location>
        <position position="373"/>
    </location>
    <ligand>
        <name>substrate</name>
    </ligand>
</feature>
<feature type="glycosylation site" description="N-linked (GlcNAc...) asparagine" evidence="2">
    <location>
        <position position="23"/>
    </location>
</feature>
<feature type="glycosylation site" description="N-linked (GlcNAc...) asparagine" evidence="2">
    <location>
        <position position="100"/>
    </location>
</feature>
<feature type="glycosylation site" description="N-linked (GlcNAc...) asparagine" evidence="2">
    <location>
        <position position="158"/>
    </location>
</feature>
<feature type="glycosylation site" description="N-linked (GlcNAc...) asparagine" evidence="2">
    <location>
        <position position="211"/>
    </location>
</feature>
<feature type="glycosylation site" description="N-linked (GlcNAc...) asparagine" evidence="2">
    <location>
        <position position="411"/>
    </location>
</feature>
<feature type="glycosylation site" description="N-linked (GlcNAc...) asparagine" evidence="2">
    <location>
        <position position="417"/>
    </location>
</feature>
<feature type="glycosylation site" description="N-linked (GlcNAc...) asparagine" evidence="2">
    <location>
        <position position="456"/>
    </location>
</feature>
<feature type="glycosylation site" description="N-linked (GlcNAc...) asparagine" evidence="2">
    <location>
        <position position="628"/>
    </location>
</feature>
<feature type="glycosylation site" description="N-linked (GlcNAc...) asparagine" evidence="2">
    <location>
        <position position="681"/>
    </location>
</feature>
<feature type="glycosylation site" description="N-linked (GlcNAc...) asparagine" evidence="2">
    <location>
        <position position="737"/>
    </location>
</feature>
<feature type="glycosylation site" description="N-linked (GlcNAc...) asparagine" evidence="2">
    <location>
        <position position="770"/>
    </location>
</feature>
<feature type="glycosylation site" description="N-linked (GlcNAc...) asparagine" evidence="2">
    <location>
        <position position="777"/>
    </location>
</feature>
<feature type="glycosylation site" description="N-linked (GlcNAc...) asparagine" evidence="2">
    <location>
        <position position="785"/>
    </location>
</feature>
<feature type="glycosylation site" description="N-linked (GlcNAc...) asparagine" evidence="2">
    <location>
        <position position="828"/>
    </location>
</feature>
<feature type="glycosylation site" description="N-linked (GlcNAc...) asparagine" evidence="2">
    <location>
        <position position="829"/>
    </location>
</feature>
<feature type="disulfide bond" evidence="1">
    <location>
        <begin position="271"/>
        <end position="324"/>
    </location>
</feature>
<keyword id="KW-0119">Carbohydrate metabolism</keyword>
<keyword id="KW-1015">Disulfide bond</keyword>
<keyword id="KW-0325">Glycoprotein</keyword>
<keyword id="KW-0326">Glycosidase</keyword>
<keyword id="KW-0378">Hydrolase</keyword>
<keyword id="KW-0624">Polysaccharide degradation</keyword>
<keyword id="KW-1185">Reference proteome</keyword>
<keyword id="KW-0964">Secreted</keyword>
<keyword id="KW-0732">Signal</keyword>
<gene>
    <name type="primary">lacB</name>
    <name type="ORF">An01g10350</name>
</gene>
<protein>
    <recommendedName>
        <fullName>Probable beta-galactosidase B</fullName>
        <ecNumber>3.2.1.23</ecNumber>
    </recommendedName>
    <alternativeName>
        <fullName>Lactase B</fullName>
    </alternativeName>
</protein>
<evidence type="ECO:0000250" key="1"/>
<evidence type="ECO:0000255" key="2"/>
<evidence type="ECO:0000305" key="3"/>
<comment type="function">
    <text evidence="1">Cleaves beta-linked terminal galactosyl residues from gangliosides, glycoproteins, and glycosaminoglycans.</text>
</comment>
<comment type="catalytic activity">
    <reaction>
        <text>Hydrolysis of terminal non-reducing beta-D-galactose residues in beta-D-galactosides.</text>
        <dbReference type="EC" id="3.2.1.23"/>
    </reaction>
</comment>
<comment type="subcellular location">
    <subcellularLocation>
        <location evidence="1">Secreted</location>
    </subcellularLocation>
</comment>
<comment type="similarity">
    <text evidence="3">Belongs to the glycosyl hydrolase 35 family.</text>
</comment>
<comment type="sequence caution" evidence="3">
    <conflict type="erroneous gene model prediction">
        <sequence resource="EMBL-CDS" id="CAK37216"/>
    </conflict>
</comment>
<dbReference type="EC" id="3.2.1.23"/>
<dbReference type="EMBL" id="AM269980">
    <property type="protein sequence ID" value="CAK37216.1"/>
    <property type="status" value="ALT_SEQ"/>
    <property type="molecule type" value="Genomic_DNA"/>
</dbReference>
<dbReference type="SMR" id="A2QA64"/>
<dbReference type="CAZy" id="GH35">
    <property type="family name" value="Glycoside Hydrolase Family 35"/>
</dbReference>
<dbReference type="GlyCosmos" id="A2QA64">
    <property type="glycosylation" value="15 sites, No reported glycans"/>
</dbReference>
<dbReference type="EnsemblFungi" id="CAK37216">
    <property type="protein sequence ID" value="CAK37216"/>
    <property type="gene ID" value="An01g10350"/>
</dbReference>
<dbReference type="Proteomes" id="UP000006706">
    <property type="component" value="Chromosome 2R"/>
</dbReference>
<dbReference type="GO" id="GO:0005576">
    <property type="term" value="C:extracellular region"/>
    <property type="evidence" value="ECO:0007669"/>
    <property type="project" value="UniProtKB-SubCell"/>
</dbReference>
<dbReference type="GO" id="GO:0004565">
    <property type="term" value="F:beta-galactosidase activity"/>
    <property type="evidence" value="ECO:0007669"/>
    <property type="project" value="UniProtKB-EC"/>
</dbReference>
<dbReference type="GO" id="GO:0000272">
    <property type="term" value="P:polysaccharide catabolic process"/>
    <property type="evidence" value="ECO:0007669"/>
    <property type="project" value="UniProtKB-KW"/>
</dbReference>
<dbReference type="FunFam" id="2.102.20.10:FF:000001">
    <property type="entry name" value="Beta-galactosidase A"/>
    <property type="match status" value="1"/>
</dbReference>
<dbReference type="FunFam" id="2.60.390.10:FF:000001">
    <property type="entry name" value="Beta-galactosidase A"/>
    <property type="match status" value="1"/>
</dbReference>
<dbReference type="FunFam" id="3.20.20.80:FF:000040">
    <property type="entry name" value="Beta-galactosidase A"/>
    <property type="match status" value="1"/>
</dbReference>
<dbReference type="FunFam" id="2.60.120.260:FF:000138">
    <property type="entry name" value="Probable beta-galactosidase B"/>
    <property type="match status" value="1"/>
</dbReference>
<dbReference type="Gene3D" id="2.102.20.10">
    <property type="entry name" value="Beta-galactosidase, domain 2"/>
    <property type="match status" value="1"/>
</dbReference>
<dbReference type="Gene3D" id="2.60.390.10">
    <property type="entry name" value="Beta-galactosidase, domain 3"/>
    <property type="match status" value="1"/>
</dbReference>
<dbReference type="Gene3D" id="2.60.120.260">
    <property type="entry name" value="Galactose-binding domain-like"/>
    <property type="match status" value="2"/>
</dbReference>
<dbReference type="Gene3D" id="3.20.20.80">
    <property type="entry name" value="Glycosidases"/>
    <property type="match status" value="1"/>
</dbReference>
<dbReference type="InterPro" id="IPR018954">
    <property type="entry name" value="Betagal_dom2"/>
</dbReference>
<dbReference type="InterPro" id="IPR037110">
    <property type="entry name" value="Betagal_dom2_sf"/>
</dbReference>
<dbReference type="InterPro" id="IPR025972">
    <property type="entry name" value="BetaGal_dom3"/>
</dbReference>
<dbReference type="InterPro" id="IPR036833">
    <property type="entry name" value="BetaGal_dom3_sf"/>
</dbReference>
<dbReference type="InterPro" id="IPR025300">
    <property type="entry name" value="BetaGal_jelly_roll_dom"/>
</dbReference>
<dbReference type="InterPro" id="IPR008979">
    <property type="entry name" value="Galactose-bd-like_sf"/>
</dbReference>
<dbReference type="InterPro" id="IPR031330">
    <property type="entry name" value="Gly_Hdrlase_35_cat"/>
</dbReference>
<dbReference type="InterPro" id="IPR001944">
    <property type="entry name" value="Glycoside_Hdrlase_35"/>
</dbReference>
<dbReference type="InterPro" id="IPR017853">
    <property type="entry name" value="Glycoside_hydrolase_SF"/>
</dbReference>
<dbReference type="PANTHER" id="PTHR23421">
    <property type="entry name" value="BETA-GALACTOSIDASE RELATED"/>
    <property type="match status" value="1"/>
</dbReference>
<dbReference type="Pfam" id="PF13364">
    <property type="entry name" value="BetaGal_ABD2"/>
    <property type="match status" value="2"/>
</dbReference>
<dbReference type="Pfam" id="PF10435">
    <property type="entry name" value="BetaGal_dom2"/>
    <property type="match status" value="1"/>
</dbReference>
<dbReference type="Pfam" id="PF13363">
    <property type="entry name" value="BetaGal_dom3"/>
    <property type="match status" value="1"/>
</dbReference>
<dbReference type="Pfam" id="PF01301">
    <property type="entry name" value="Glyco_hydro_35"/>
    <property type="match status" value="1"/>
</dbReference>
<dbReference type="PRINTS" id="PR00742">
    <property type="entry name" value="GLHYDRLASE35"/>
</dbReference>
<dbReference type="SMART" id="SM01029">
    <property type="entry name" value="BetaGal_dom2"/>
    <property type="match status" value="1"/>
</dbReference>
<dbReference type="SUPFAM" id="SSF51445">
    <property type="entry name" value="(Trans)glycosidases"/>
    <property type="match status" value="1"/>
</dbReference>
<dbReference type="SUPFAM" id="SSF117100">
    <property type="entry name" value="Beta-galactosidase LacA, domain 3"/>
    <property type="match status" value="1"/>
</dbReference>
<dbReference type="SUPFAM" id="SSF49785">
    <property type="entry name" value="Galactose-binding domain-like"/>
    <property type="match status" value="2"/>
</dbReference>
<dbReference type="SUPFAM" id="SSF51011">
    <property type="entry name" value="Glycosyl hydrolase domain"/>
    <property type="match status" value="1"/>
</dbReference>
<name>BGALB_ASPNC</name>
<proteinExistence type="inferred from homology"/>